<feature type="signal peptide" evidence="3">
    <location>
        <begin position="1"/>
        <end position="27"/>
    </location>
</feature>
<feature type="chain" id="PRO_0000012901" description="Adhesion G protein-coupled receptor A3">
    <location>
        <begin position="28"/>
        <end position="1310"/>
    </location>
</feature>
<feature type="topological domain" description="Extracellular" evidence="8">
    <location>
        <begin position="28"/>
        <end position="747"/>
    </location>
</feature>
<feature type="transmembrane region" description="Helical; Name=1" evidence="3">
    <location>
        <begin position="748"/>
        <end position="768"/>
    </location>
</feature>
<feature type="topological domain" description="Cytoplasmic" evidence="8">
    <location>
        <begin position="769"/>
        <end position="785"/>
    </location>
</feature>
<feature type="transmembrane region" description="Helical; Name=2" evidence="3">
    <location>
        <begin position="786"/>
        <end position="806"/>
    </location>
</feature>
<feature type="topological domain" description="Extracellular" evidence="8">
    <location>
        <begin position="807"/>
        <end position="815"/>
    </location>
</feature>
<feature type="transmembrane region" description="Helical; Name=3" evidence="3">
    <location>
        <begin position="816"/>
        <end position="836"/>
    </location>
</feature>
<feature type="topological domain" description="Cytoplasmic" evidence="8">
    <location>
        <begin position="837"/>
        <end position="865"/>
    </location>
</feature>
<feature type="transmembrane region" description="Helical; Name=4" evidence="3">
    <location>
        <begin position="866"/>
        <end position="886"/>
    </location>
</feature>
<feature type="topological domain" description="Extracellular" evidence="8">
    <location>
        <begin position="887"/>
        <end position="908"/>
    </location>
</feature>
<feature type="transmembrane region" description="Helical; Name=5" evidence="3">
    <location>
        <begin position="909"/>
        <end position="929"/>
    </location>
</feature>
<feature type="topological domain" description="Cytoplasmic" evidence="8">
    <location>
        <begin position="930"/>
        <end position="985"/>
    </location>
</feature>
<feature type="transmembrane region" description="Helical; Name=6" evidence="3">
    <location>
        <begin position="986"/>
        <end position="1006"/>
    </location>
</feature>
<feature type="topological domain" description="Extracellular" evidence="8">
    <location>
        <begin position="1007"/>
        <end position="1013"/>
    </location>
</feature>
<feature type="transmembrane region" description="Helical; Name=7" evidence="3">
    <location>
        <begin position="1014"/>
        <end position="1034"/>
    </location>
</feature>
<feature type="topological domain" description="Cytoplasmic" evidence="8">
    <location>
        <begin position="1035"/>
        <end position="1310"/>
    </location>
</feature>
<feature type="domain" description="LRRNT">
    <location>
        <begin position="28"/>
        <end position="70"/>
    </location>
</feature>
<feature type="repeat" description="LRR 1">
    <location>
        <begin position="71"/>
        <end position="92"/>
    </location>
</feature>
<feature type="repeat" description="LRR 2">
    <location>
        <begin position="95"/>
        <end position="116"/>
    </location>
</feature>
<feature type="repeat" description="LRR 3">
    <location>
        <begin position="119"/>
        <end position="140"/>
    </location>
</feature>
<feature type="repeat" description="LRR 4">
    <location>
        <begin position="143"/>
        <end position="164"/>
    </location>
</feature>
<feature type="domain" description="LRRCT">
    <location>
        <begin position="176"/>
        <end position="226"/>
    </location>
</feature>
<feature type="domain" description="Ig-like">
    <location>
        <begin position="231"/>
        <end position="329"/>
    </location>
</feature>
<feature type="domain" description="GAIN-B" evidence="4">
    <location>
        <begin position="572"/>
        <end position="739"/>
    </location>
</feature>
<feature type="region of interest" description="GPS" evidence="4">
    <location>
        <begin position="690"/>
        <end position="739"/>
    </location>
</feature>
<feature type="region of interest" description="Disordered" evidence="6">
    <location>
        <begin position="1065"/>
        <end position="1084"/>
    </location>
</feature>
<feature type="region of interest" description="Disordered" evidence="6">
    <location>
        <begin position="1187"/>
        <end position="1208"/>
    </location>
</feature>
<feature type="region of interest" description="Disordered" evidence="6">
    <location>
        <begin position="1221"/>
        <end position="1264"/>
    </location>
</feature>
<feature type="short sequence motif" description="PDZ-binding" evidence="3">
    <location>
        <begin position="1308"/>
        <end position="1310"/>
    </location>
</feature>
<feature type="compositionally biased region" description="Polar residues" evidence="6">
    <location>
        <begin position="1222"/>
        <end position="1239"/>
    </location>
</feature>
<feature type="glycosylation site" description="N-linked (GlcNAc...) asparagine" evidence="3">
    <location>
        <position position="70"/>
    </location>
</feature>
<feature type="glycosylation site" description="N-linked (GlcNAc...) asparagine" evidence="3">
    <location>
        <position position="87"/>
    </location>
</feature>
<feature type="glycosylation site" description="N-linked (GlcNAc...) asparagine" evidence="3">
    <location>
        <position position="148"/>
    </location>
</feature>
<feature type="glycosylation site" description="N-linked (GlcNAc...) asparagine" evidence="3">
    <location>
        <position position="195"/>
    </location>
</feature>
<feature type="glycosylation site" description="N-linked (GlcNAc...) asparagine" evidence="3">
    <location>
        <position position="290"/>
    </location>
</feature>
<feature type="glycosylation site" description="N-linked (GlcNAc...) asparagine" evidence="3">
    <location>
        <position position="321"/>
    </location>
</feature>
<feature type="glycosylation site" description="N-linked (GlcNAc...) asparagine" evidence="3">
    <location>
        <position position="422"/>
    </location>
</feature>
<feature type="glycosylation site" description="N-linked (GlcNAc...) asparagine" evidence="3">
    <location>
        <position position="442"/>
    </location>
</feature>
<feature type="glycosylation site" description="N-linked (GlcNAc...) asparagine" evidence="3">
    <location>
        <position position="581"/>
    </location>
</feature>
<feature type="glycosylation site" description="N-linked (GlcNAc...) asparagine" evidence="3">
    <location>
        <position position="641"/>
    </location>
</feature>
<feature type="glycosylation site" description="N-linked (GlcNAc...) asparagine" evidence="3">
    <location>
        <position position="676"/>
    </location>
</feature>
<feature type="glycosylation site" description="N-linked (GlcNAc...) asparagine" evidence="3">
    <location>
        <position position="717"/>
    </location>
</feature>
<feature type="glycosylation site" description="N-linked (GlcNAc...) asparagine" evidence="3">
    <location>
        <position position="810"/>
    </location>
</feature>
<feature type="disulfide bond" evidence="5">
    <location>
        <begin position="253"/>
        <end position="313"/>
    </location>
</feature>
<feature type="disulfide bond" evidence="4">
    <location>
        <begin position="709"/>
        <end position="723"/>
    </location>
</feature>
<feature type="sequence conflict" description="In Ref. 2; AAH52391." evidence="8" ref="2">
    <original>A</original>
    <variation>P</variation>
    <location>
        <position position="30"/>
    </location>
</feature>
<feature type="sequence conflict" description="In Ref. 2; AAH19649." evidence="8" ref="2">
    <original>A</original>
    <variation>T</variation>
    <location>
        <position position="1070"/>
    </location>
</feature>
<accession>Q7TT36</accession>
<accession>E9QK56</accession>
<accession>Q6PE67</accession>
<accession>Q8VE71</accession>
<name>AGRA3_MOUSE</name>
<sequence length="1310" mass="144697">MEPPPPLLLLPLALLALLWGGERGAAALPAGCKHDGRARGTGRAAAAAEGKVVCSSLELAQVLPPDTLPNRTVTLILSNNKISELKNGSFSGLSLLERLDLRNNLISRIAPGAFWGLSSLKRLDLTNNRIGCLNADVFRGLTNLVRLNLSGNLFTSLSQGTFDYLGSLRSLEFQTEYLLCDCNILWMHRWVKERNITVRDTRCVYPKSLQAQPVTGVKQELLTCDPPLELPSFYMTPSHRQVVFEGDSLPFQCMASYIDQDMQVLWYQDGRIVETDESQGIFVEKSMIHNCSLIASALTISNIQAGSTGNWGCHVQTKRGNNTRTVDIVVLESSAQYCPPERVVNNKGDFRWPRTLAGITAYLQCTRNTHSSGIYPGSAQDERKAWRRCDRGGFWADDDYSRCQYANDVTRVLYMFNQMPLNLTNAVATARQLLAYTVEAANFSDKMDVIFVAEMIEKFGRFTREEKSKELGDVMVDVASNIMLADERVLWLAQREAKACSRIVQCLQRIATHRLASGAHVYSTYSPNIALEAYVIKAAGFTGMTCSVFQKVAASDRAGLSDYGRRDPDGNLDKQLSFKCNVSSTFSSLALKNTIMEASIQLPSSLLSPKHKREARAADDALYKLQLIAFRNGKLFPATGNSTKLADDGKRRTVVTPVILTKIDGATVDTHHIPVNVTLRRIAHGADAVAAQWDFDLLNGQGGWKSDGCCILYSDENITTIQCGSLGNYAVLMDLTGTELYTPAASLLHPVVYTTAITLLLCLLAVIISYMYHHSLIRISLKSWHMLVNLCFHILLTCVVFVGGITQTRNASVCQAVGIILHYSTLATVLWVGVTARNIYKQVTKKAKRCQDPDEPPAPPRPMLRFYLIGGGIPIIVCGITAAANIKNYGSRPSAPYCWMAWEPSLGAFYGPASFITFVNCMYFLSIFIQLKRHPERKYELKEPTEEQQRLAANENGEINHQDSMSLSLISTSTLENEHSFQSQLLGASLTLLLYVILWMFGAMAVSLYYPLDLVFSFFFGATCLSFSAFMMVHHCINREDVRLAWIMMCCPGRSSYSVQVNVQPPNSSATNGEAPKCTNSSAESSCTNKSASSFKNSSQGCKLTNLQAAAAQYHSNALPVNATPQLDNSLTEHSMDNDIKMHVAPLDVQFRTNVHPSRHHKNRSKGHRASRLTVLREYAYDVPTSVEGSVQNGLPKSRPGSNEGHSRSRRAYLAYRERQYNPPQQDSSDACSTLPKSSRNVEKPVSTSSKKDAPRKPAAADLESQQKSYGLNLAVQNGPVKSNGQEGPLLATDVTGNVRTGLWKHETTV</sequence>
<protein>
    <recommendedName>
        <fullName>Adhesion G protein-coupled receptor A3</fullName>
    </recommendedName>
    <alternativeName>
        <fullName>G-protein coupled receptor 125</fullName>
    </alternativeName>
</protein>
<keyword id="KW-1015">Disulfide bond</keyword>
<keyword id="KW-0297">G-protein coupled receptor</keyword>
<keyword id="KW-0325">Glycoprotein</keyword>
<keyword id="KW-0393">Immunoglobulin domain</keyword>
<keyword id="KW-0433">Leucine-rich repeat</keyword>
<keyword id="KW-0472">Membrane</keyword>
<keyword id="KW-0675">Receptor</keyword>
<keyword id="KW-1185">Reference proteome</keyword>
<keyword id="KW-0677">Repeat</keyword>
<keyword id="KW-0732">Signal</keyword>
<keyword id="KW-0807">Transducer</keyword>
<keyword id="KW-0812">Transmembrane</keyword>
<keyword id="KW-1133">Transmembrane helix</keyword>
<proteinExistence type="evidence at transcript level"/>
<gene>
    <name type="primary">Adgra3</name>
    <name type="synonym">Gpr125</name>
</gene>
<reference key="1">
    <citation type="journal article" date="2009" name="PLoS Biol.">
        <title>Lineage-specific biology revealed by a finished genome assembly of the mouse.</title>
        <authorList>
            <person name="Church D.M."/>
            <person name="Goodstadt L."/>
            <person name="Hillier L.W."/>
            <person name="Zody M.C."/>
            <person name="Goldstein S."/>
            <person name="She X."/>
            <person name="Bult C.J."/>
            <person name="Agarwala R."/>
            <person name="Cherry J.L."/>
            <person name="DiCuccio M."/>
            <person name="Hlavina W."/>
            <person name="Kapustin Y."/>
            <person name="Meric P."/>
            <person name="Maglott D."/>
            <person name="Birtle Z."/>
            <person name="Marques A.C."/>
            <person name="Graves T."/>
            <person name="Zhou S."/>
            <person name="Teague B."/>
            <person name="Potamousis K."/>
            <person name="Churas C."/>
            <person name="Place M."/>
            <person name="Herschleb J."/>
            <person name="Runnheim R."/>
            <person name="Forrest D."/>
            <person name="Amos-Landgraf J."/>
            <person name="Schwartz D.C."/>
            <person name="Cheng Z."/>
            <person name="Lindblad-Toh K."/>
            <person name="Eichler E.E."/>
            <person name="Ponting C.P."/>
        </authorList>
    </citation>
    <scope>NUCLEOTIDE SEQUENCE [LARGE SCALE GENOMIC DNA]</scope>
    <source>
        <strain>C57BL/6J</strain>
    </source>
</reference>
<reference key="2">
    <citation type="journal article" date="2004" name="Genome Res.">
        <title>The status, quality, and expansion of the NIH full-length cDNA project: the Mammalian Gene Collection (MGC).</title>
        <authorList>
            <consortium name="The MGC Project Team"/>
        </authorList>
    </citation>
    <scope>NUCLEOTIDE SEQUENCE [LARGE SCALE MRNA]</scope>
    <source>
        <strain>C57BL/6J</strain>
        <tissue>Brain</tissue>
        <tissue>Olfactory epithelium</tissue>
    </source>
</reference>
<reference key="3">
    <citation type="journal article" date="2007" name="Nature">
        <title>Generation of functional multipotent adult stem cells from GPR125+ germline progenitors.</title>
        <authorList>
            <person name="Seandel M."/>
            <person name="James D."/>
            <person name="Shmelkov S.V."/>
            <person name="Falciatori I."/>
            <person name="Kim J."/>
            <person name="Chavala S."/>
            <person name="Scherr D.S."/>
            <person name="Zhang F."/>
            <person name="Torres R."/>
            <person name="Gale N.W."/>
            <person name="Yancopoulos G.D."/>
            <person name="Murphy A."/>
            <person name="Valenzuela D.M."/>
            <person name="Hobbs R.M."/>
            <person name="Pandolfi P.P."/>
            <person name="Rafii S."/>
        </authorList>
    </citation>
    <scope>TISSUE SPECIFICITY</scope>
</reference>
<organism>
    <name type="scientific">Mus musculus</name>
    <name type="common">Mouse</name>
    <dbReference type="NCBI Taxonomy" id="10090"/>
    <lineage>
        <taxon>Eukaryota</taxon>
        <taxon>Metazoa</taxon>
        <taxon>Chordata</taxon>
        <taxon>Craniata</taxon>
        <taxon>Vertebrata</taxon>
        <taxon>Euteleostomi</taxon>
        <taxon>Mammalia</taxon>
        <taxon>Eutheria</taxon>
        <taxon>Euarchontoglires</taxon>
        <taxon>Glires</taxon>
        <taxon>Rodentia</taxon>
        <taxon>Myomorpha</taxon>
        <taxon>Muroidea</taxon>
        <taxon>Muridae</taxon>
        <taxon>Murinae</taxon>
        <taxon>Mus</taxon>
        <taxon>Mus</taxon>
    </lineage>
</organism>
<dbReference type="EMBL" id="AC102501">
    <property type="status" value="NOT_ANNOTATED_CDS"/>
    <property type="molecule type" value="Genomic_DNA"/>
</dbReference>
<dbReference type="EMBL" id="AC130666">
    <property type="status" value="NOT_ANNOTATED_CDS"/>
    <property type="molecule type" value="Genomic_DNA"/>
</dbReference>
<dbReference type="EMBL" id="BC019649">
    <property type="protein sequence ID" value="AAH19649.1"/>
    <property type="molecule type" value="mRNA"/>
</dbReference>
<dbReference type="EMBL" id="BC052391">
    <property type="protein sequence ID" value="AAH52391.1"/>
    <property type="status" value="ALT_INIT"/>
    <property type="molecule type" value="mRNA"/>
</dbReference>
<dbReference type="EMBL" id="BC058251">
    <property type="protein sequence ID" value="AAH58251.1"/>
    <property type="molecule type" value="mRNA"/>
</dbReference>
<dbReference type="CCDS" id="CCDS51500.1"/>
<dbReference type="RefSeq" id="NP_598672.1">
    <property type="nucleotide sequence ID" value="NM_133911.1"/>
</dbReference>
<dbReference type="SMR" id="Q7TT36"/>
<dbReference type="BioGRID" id="214207">
    <property type="interactions" value="2"/>
</dbReference>
<dbReference type="FunCoup" id="Q7TT36">
    <property type="interactions" value="1015"/>
</dbReference>
<dbReference type="STRING" id="10090.ENSMUSP00000030971"/>
<dbReference type="MEROPS" id="P02.950"/>
<dbReference type="GlyConnect" id="2107">
    <property type="glycosylation" value="2 N-Linked glycans (1 site)"/>
</dbReference>
<dbReference type="GlyCosmos" id="Q7TT36">
    <property type="glycosylation" value="13 sites, 2 glycans"/>
</dbReference>
<dbReference type="GlyGen" id="Q7TT36">
    <property type="glycosylation" value="13 sites, 5 N-linked glycans (7 sites)"/>
</dbReference>
<dbReference type="iPTMnet" id="Q7TT36"/>
<dbReference type="PhosphoSitePlus" id="Q7TT36"/>
<dbReference type="SwissPalm" id="Q7TT36"/>
<dbReference type="PaxDb" id="10090-ENSMUSP00000030971"/>
<dbReference type="ProteomicsDB" id="296085"/>
<dbReference type="Antibodypedia" id="1933">
    <property type="antibodies" value="157 antibodies from 30 providers"/>
</dbReference>
<dbReference type="Ensembl" id="ENSMUST00000030971.7">
    <property type="protein sequence ID" value="ENSMUSP00000030971.6"/>
    <property type="gene ID" value="ENSMUSG00000029090.13"/>
</dbReference>
<dbReference type="GeneID" id="70693"/>
<dbReference type="KEGG" id="mmu:70693"/>
<dbReference type="UCSC" id="uc008xjz.2">
    <property type="organism name" value="mouse"/>
</dbReference>
<dbReference type="AGR" id="MGI:1917943"/>
<dbReference type="CTD" id="166647"/>
<dbReference type="MGI" id="MGI:1917943">
    <property type="gene designation" value="Adgra3"/>
</dbReference>
<dbReference type="VEuPathDB" id="HostDB:ENSMUSG00000029090"/>
<dbReference type="eggNOG" id="KOG0619">
    <property type="taxonomic scope" value="Eukaryota"/>
</dbReference>
<dbReference type="eggNOG" id="KOG4237">
    <property type="taxonomic scope" value="Eukaryota"/>
</dbReference>
<dbReference type="GeneTree" id="ENSGT00940000157235"/>
<dbReference type="HOGENOM" id="CLU_005242_1_0_1"/>
<dbReference type="InParanoid" id="Q7TT36"/>
<dbReference type="OMA" id="CQQHYQH"/>
<dbReference type="OrthoDB" id="10031018at2759"/>
<dbReference type="PhylomeDB" id="Q7TT36"/>
<dbReference type="TreeFam" id="TF331206"/>
<dbReference type="BioGRID-ORCS" id="70693">
    <property type="hits" value="4 hits in 79 CRISPR screens"/>
</dbReference>
<dbReference type="ChiTaRS" id="Adgra3">
    <property type="organism name" value="mouse"/>
</dbReference>
<dbReference type="PRO" id="PR:Q7TT36"/>
<dbReference type="Proteomes" id="UP000000589">
    <property type="component" value="Chromosome 5"/>
</dbReference>
<dbReference type="RNAct" id="Q7TT36">
    <property type="molecule type" value="protein"/>
</dbReference>
<dbReference type="Bgee" id="ENSMUSG00000029090">
    <property type="expression patterns" value="Expressed in placenta labyrinth and 292 other cell types or tissues"/>
</dbReference>
<dbReference type="GO" id="GO:0009897">
    <property type="term" value="C:external side of plasma membrane"/>
    <property type="evidence" value="ECO:0000314"/>
    <property type="project" value="MGI"/>
</dbReference>
<dbReference type="GO" id="GO:0004930">
    <property type="term" value="F:G protein-coupled receptor activity"/>
    <property type="evidence" value="ECO:0007669"/>
    <property type="project" value="UniProtKB-KW"/>
</dbReference>
<dbReference type="GO" id="GO:0007166">
    <property type="term" value="P:cell surface receptor signaling pathway"/>
    <property type="evidence" value="ECO:0007669"/>
    <property type="project" value="InterPro"/>
</dbReference>
<dbReference type="CDD" id="cd15999">
    <property type="entry name" value="7tmB2_GPR125"/>
    <property type="match status" value="1"/>
</dbReference>
<dbReference type="FunFam" id="2.60.40.10:FF:000445">
    <property type="entry name" value="Adhesion G protein-coupled receptor A3"/>
    <property type="match status" value="1"/>
</dbReference>
<dbReference type="FunFam" id="2.60.220.50:FF:000011">
    <property type="entry name" value="adhesion G protein-coupled receptor A3"/>
    <property type="match status" value="1"/>
</dbReference>
<dbReference type="FunFam" id="3.80.10.10:FF:000287">
    <property type="entry name" value="adhesion G protein-coupled receptor A3"/>
    <property type="match status" value="1"/>
</dbReference>
<dbReference type="Gene3D" id="2.60.220.50">
    <property type="match status" value="1"/>
</dbReference>
<dbReference type="Gene3D" id="4.10.1240.10">
    <property type="entry name" value="GPCR, family 2, extracellular hormone receptor domain"/>
    <property type="match status" value="1"/>
</dbReference>
<dbReference type="Gene3D" id="2.60.40.10">
    <property type="entry name" value="Immunoglobulins"/>
    <property type="match status" value="1"/>
</dbReference>
<dbReference type="Gene3D" id="1.20.1070.10">
    <property type="entry name" value="Rhodopsin 7-helix transmembrane proteins"/>
    <property type="match status" value="1"/>
</dbReference>
<dbReference type="Gene3D" id="3.80.10.10">
    <property type="entry name" value="Ribonuclease Inhibitor"/>
    <property type="match status" value="1"/>
</dbReference>
<dbReference type="InterPro" id="IPR051963">
    <property type="entry name" value="Adhesion_GPCR_A"/>
</dbReference>
<dbReference type="InterPro" id="IPR000483">
    <property type="entry name" value="Cys-rich_flank_reg_C"/>
</dbReference>
<dbReference type="InterPro" id="IPR057244">
    <property type="entry name" value="GAIN_B"/>
</dbReference>
<dbReference type="InterPro" id="IPR046338">
    <property type="entry name" value="GAIN_dom_sf"/>
</dbReference>
<dbReference type="InterPro" id="IPR017981">
    <property type="entry name" value="GPCR_2-like_7TM"/>
</dbReference>
<dbReference type="InterPro" id="IPR036445">
    <property type="entry name" value="GPCR_2_extracell_dom_sf"/>
</dbReference>
<dbReference type="InterPro" id="IPR001879">
    <property type="entry name" value="GPCR_2_extracellular_dom"/>
</dbReference>
<dbReference type="InterPro" id="IPR000832">
    <property type="entry name" value="GPCR_2_secretin-like"/>
</dbReference>
<dbReference type="InterPro" id="IPR000203">
    <property type="entry name" value="GPS"/>
</dbReference>
<dbReference type="InterPro" id="IPR007110">
    <property type="entry name" value="Ig-like_dom"/>
</dbReference>
<dbReference type="InterPro" id="IPR036179">
    <property type="entry name" value="Ig-like_dom_sf"/>
</dbReference>
<dbReference type="InterPro" id="IPR013783">
    <property type="entry name" value="Ig-like_fold"/>
</dbReference>
<dbReference type="InterPro" id="IPR013098">
    <property type="entry name" value="Ig_I-set"/>
</dbReference>
<dbReference type="InterPro" id="IPR003599">
    <property type="entry name" value="Ig_sub"/>
</dbReference>
<dbReference type="InterPro" id="IPR001611">
    <property type="entry name" value="Leu-rich_rpt"/>
</dbReference>
<dbReference type="InterPro" id="IPR003591">
    <property type="entry name" value="Leu-rich_rpt_typical-subtyp"/>
</dbReference>
<dbReference type="InterPro" id="IPR032675">
    <property type="entry name" value="LRR_dom_sf"/>
</dbReference>
<dbReference type="PANTHER" id="PTHR45930:SF2">
    <property type="entry name" value="ADHESION G PROTEIN-COUPLED RECEPTOR A3"/>
    <property type="match status" value="1"/>
</dbReference>
<dbReference type="PANTHER" id="PTHR45930">
    <property type="entry name" value="G-PROTEIN COUPLED RECEPTOR 124-LIKE PROTEIN"/>
    <property type="match status" value="1"/>
</dbReference>
<dbReference type="Pfam" id="PF00002">
    <property type="entry name" value="7tm_2"/>
    <property type="match status" value="1"/>
</dbReference>
<dbReference type="Pfam" id="PF01825">
    <property type="entry name" value="GPS"/>
    <property type="match status" value="1"/>
</dbReference>
<dbReference type="Pfam" id="PF07679">
    <property type="entry name" value="I-set"/>
    <property type="match status" value="1"/>
</dbReference>
<dbReference type="Pfam" id="PF13855">
    <property type="entry name" value="LRR_8"/>
    <property type="match status" value="1"/>
</dbReference>
<dbReference type="SMART" id="SM00303">
    <property type="entry name" value="GPS"/>
    <property type="match status" value="1"/>
</dbReference>
<dbReference type="SMART" id="SM00409">
    <property type="entry name" value="IG"/>
    <property type="match status" value="1"/>
</dbReference>
<dbReference type="SMART" id="SM00369">
    <property type="entry name" value="LRR_TYP"/>
    <property type="match status" value="4"/>
</dbReference>
<dbReference type="SMART" id="SM00082">
    <property type="entry name" value="LRRCT"/>
    <property type="match status" value="1"/>
</dbReference>
<dbReference type="SUPFAM" id="SSF111418">
    <property type="entry name" value="Hormone receptor domain"/>
    <property type="match status" value="1"/>
</dbReference>
<dbReference type="SUPFAM" id="SSF48726">
    <property type="entry name" value="Immunoglobulin"/>
    <property type="match status" value="1"/>
</dbReference>
<dbReference type="SUPFAM" id="SSF52058">
    <property type="entry name" value="L domain-like"/>
    <property type="match status" value="1"/>
</dbReference>
<dbReference type="PROSITE" id="PS50227">
    <property type="entry name" value="G_PROTEIN_RECEP_F2_3"/>
    <property type="match status" value="1"/>
</dbReference>
<dbReference type="PROSITE" id="PS50261">
    <property type="entry name" value="G_PROTEIN_RECEP_F2_4"/>
    <property type="match status" value="1"/>
</dbReference>
<dbReference type="PROSITE" id="PS50221">
    <property type="entry name" value="GAIN_B"/>
    <property type="match status" value="1"/>
</dbReference>
<dbReference type="PROSITE" id="PS50835">
    <property type="entry name" value="IG_LIKE"/>
    <property type="match status" value="1"/>
</dbReference>
<dbReference type="PROSITE" id="PS51450">
    <property type="entry name" value="LRR"/>
    <property type="match status" value="4"/>
</dbReference>
<evidence type="ECO:0000250" key="1">
    <source>
        <dbReference type="UniProtKB" id="Q8IWK6"/>
    </source>
</evidence>
<evidence type="ECO:0000250" key="2">
    <source>
        <dbReference type="UniProtKB" id="S4X0Q8"/>
    </source>
</evidence>
<evidence type="ECO:0000255" key="3"/>
<evidence type="ECO:0000255" key="4">
    <source>
        <dbReference type="PROSITE-ProRule" id="PRU00098"/>
    </source>
</evidence>
<evidence type="ECO:0000255" key="5">
    <source>
        <dbReference type="PROSITE-ProRule" id="PRU00114"/>
    </source>
</evidence>
<evidence type="ECO:0000256" key="6">
    <source>
        <dbReference type="SAM" id="MobiDB-lite"/>
    </source>
</evidence>
<evidence type="ECO:0000269" key="7">
    <source>
    </source>
</evidence>
<evidence type="ECO:0000305" key="8"/>
<comment type="function">
    <text evidence="2">Orphan receptor that may have a role in planar cell polarity pathway.</text>
</comment>
<comment type="subunit">
    <text evidence="1">Interacts (via PDZ-binding motif) with DLG1.</text>
</comment>
<comment type="subcellular location">
    <subcellularLocation>
        <location evidence="2">Membrane</location>
        <topology evidence="3">Multi-pass membrane protein</topology>
    </subcellularLocation>
</comment>
<comment type="tissue specificity">
    <text evidence="7">Expressed by spermatogonial progenitor cells located within the outer cell layer of the seminiferous tubule and by multipotent adult spermatogonial-derived stem cells.</text>
</comment>
<comment type="miscellaneous">
    <text evidence="1">Most adhesion GPCRs proteins undergo autoproteolysis at the GPS region of the GAIN-B domain. ADGRA3 is predicted non-cleavable because of the lack of a consensus catalytic triad sequence within GPS region.</text>
</comment>
<comment type="similarity">
    <text evidence="8">Belongs to the G-protein coupled receptor 2 family. Adhesion G-protein coupled receptor (ADGR) subfamily.</text>
</comment>
<comment type="sequence caution" evidence="8">
    <conflict type="erroneous initiation">
        <sequence resource="EMBL-CDS" id="AAH52391"/>
    </conflict>
    <text>Extended N-terminus.</text>
</comment>